<feature type="chain" id="PRO_1000122548" description="Aspartyl/glutamyl-tRNA(Asn/Gln) amidotransferase subunit C">
    <location>
        <begin position="1"/>
        <end position="97"/>
    </location>
</feature>
<feature type="region of interest" description="Disordered" evidence="2">
    <location>
        <begin position="74"/>
        <end position="97"/>
    </location>
</feature>
<feature type="compositionally biased region" description="Low complexity" evidence="2">
    <location>
        <begin position="74"/>
        <end position="84"/>
    </location>
</feature>
<comment type="function">
    <text evidence="1">Allows the formation of correctly charged Asn-tRNA(Asn) or Gln-tRNA(Gln) through the transamidation of misacylated Asp-tRNA(Asn) or Glu-tRNA(Gln) in organisms which lack either or both of asparaginyl-tRNA or glutaminyl-tRNA synthetases. The reaction takes place in the presence of glutamine and ATP through an activated phospho-Asp-tRNA(Asn) or phospho-Glu-tRNA(Gln).</text>
</comment>
<comment type="catalytic activity">
    <reaction evidence="1">
        <text>L-glutamyl-tRNA(Gln) + L-glutamine + ATP + H2O = L-glutaminyl-tRNA(Gln) + L-glutamate + ADP + phosphate + H(+)</text>
        <dbReference type="Rhea" id="RHEA:17521"/>
        <dbReference type="Rhea" id="RHEA-COMP:9681"/>
        <dbReference type="Rhea" id="RHEA-COMP:9684"/>
        <dbReference type="ChEBI" id="CHEBI:15377"/>
        <dbReference type="ChEBI" id="CHEBI:15378"/>
        <dbReference type="ChEBI" id="CHEBI:29985"/>
        <dbReference type="ChEBI" id="CHEBI:30616"/>
        <dbReference type="ChEBI" id="CHEBI:43474"/>
        <dbReference type="ChEBI" id="CHEBI:58359"/>
        <dbReference type="ChEBI" id="CHEBI:78520"/>
        <dbReference type="ChEBI" id="CHEBI:78521"/>
        <dbReference type="ChEBI" id="CHEBI:456216"/>
    </reaction>
</comment>
<comment type="catalytic activity">
    <reaction evidence="1">
        <text>L-aspartyl-tRNA(Asn) + L-glutamine + ATP + H2O = L-asparaginyl-tRNA(Asn) + L-glutamate + ADP + phosphate + 2 H(+)</text>
        <dbReference type="Rhea" id="RHEA:14513"/>
        <dbReference type="Rhea" id="RHEA-COMP:9674"/>
        <dbReference type="Rhea" id="RHEA-COMP:9677"/>
        <dbReference type="ChEBI" id="CHEBI:15377"/>
        <dbReference type="ChEBI" id="CHEBI:15378"/>
        <dbReference type="ChEBI" id="CHEBI:29985"/>
        <dbReference type="ChEBI" id="CHEBI:30616"/>
        <dbReference type="ChEBI" id="CHEBI:43474"/>
        <dbReference type="ChEBI" id="CHEBI:58359"/>
        <dbReference type="ChEBI" id="CHEBI:78515"/>
        <dbReference type="ChEBI" id="CHEBI:78516"/>
        <dbReference type="ChEBI" id="CHEBI:456216"/>
    </reaction>
</comment>
<comment type="subunit">
    <text evidence="1">Heterotrimer of A, B and C subunits.</text>
</comment>
<comment type="similarity">
    <text evidence="1">Belongs to the GatC family.</text>
</comment>
<organism>
    <name type="scientific">Anaeromyxobacter dehalogenans (strain 2CP-1 / ATCC BAA-258)</name>
    <dbReference type="NCBI Taxonomy" id="455488"/>
    <lineage>
        <taxon>Bacteria</taxon>
        <taxon>Pseudomonadati</taxon>
        <taxon>Myxococcota</taxon>
        <taxon>Myxococcia</taxon>
        <taxon>Myxococcales</taxon>
        <taxon>Cystobacterineae</taxon>
        <taxon>Anaeromyxobacteraceae</taxon>
        <taxon>Anaeromyxobacter</taxon>
    </lineage>
</organism>
<gene>
    <name evidence="1" type="primary">gatC</name>
    <name type="ordered locus">A2cp1_4343</name>
</gene>
<protein>
    <recommendedName>
        <fullName evidence="1">Aspartyl/glutamyl-tRNA(Asn/Gln) amidotransferase subunit C</fullName>
        <shortName evidence="1">Asp/Glu-ADT subunit C</shortName>
        <ecNumber evidence="1">6.3.5.-</ecNumber>
    </recommendedName>
</protein>
<name>GATC_ANAD2</name>
<keyword id="KW-0067">ATP-binding</keyword>
<keyword id="KW-0436">Ligase</keyword>
<keyword id="KW-0547">Nucleotide-binding</keyword>
<keyword id="KW-0648">Protein biosynthesis</keyword>
<sequence>MALSLEEVRRIAVLARLRLSEEEERTFAGQLSAILDHVRQLEELDVTAVEPMTHALAAGELPARREDAVLPSLTPEEATAAAPAREGTAFKVPRIIE</sequence>
<dbReference type="EC" id="6.3.5.-" evidence="1"/>
<dbReference type="EMBL" id="CP001359">
    <property type="protein sequence ID" value="ACL67660.1"/>
    <property type="molecule type" value="Genomic_DNA"/>
</dbReference>
<dbReference type="RefSeq" id="WP_015935355.1">
    <property type="nucleotide sequence ID" value="NC_011891.1"/>
</dbReference>
<dbReference type="SMR" id="B8JBQ2"/>
<dbReference type="KEGG" id="acp:A2cp1_4343"/>
<dbReference type="HOGENOM" id="CLU_105899_2_0_7"/>
<dbReference type="Proteomes" id="UP000007089">
    <property type="component" value="Chromosome"/>
</dbReference>
<dbReference type="GO" id="GO:0050566">
    <property type="term" value="F:asparaginyl-tRNA synthase (glutamine-hydrolyzing) activity"/>
    <property type="evidence" value="ECO:0007669"/>
    <property type="project" value="RHEA"/>
</dbReference>
<dbReference type="GO" id="GO:0005524">
    <property type="term" value="F:ATP binding"/>
    <property type="evidence" value="ECO:0007669"/>
    <property type="project" value="UniProtKB-KW"/>
</dbReference>
<dbReference type="GO" id="GO:0050567">
    <property type="term" value="F:glutaminyl-tRNA synthase (glutamine-hydrolyzing) activity"/>
    <property type="evidence" value="ECO:0007669"/>
    <property type="project" value="UniProtKB-UniRule"/>
</dbReference>
<dbReference type="GO" id="GO:0070681">
    <property type="term" value="P:glutaminyl-tRNAGln biosynthesis via transamidation"/>
    <property type="evidence" value="ECO:0007669"/>
    <property type="project" value="TreeGrafter"/>
</dbReference>
<dbReference type="GO" id="GO:0006450">
    <property type="term" value="P:regulation of translational fidelity"/>
    <property type="evidence" value="ECO:0007669"/>
    <property type="project" value="InterPro"/>
</dbReference>
<dbReference type="GO" id="GO:0006412">
    <property type="term" value="P:translation"/>
    <property type="evidence" value="ECO:0007669"/>
    <property type="project" value="UniProtKB-UniRule"/>
</dbReference>
<dbReference type="Gene3D" id="1.10.20.60">
    <property type="entry name" value="Glu-tRNAGln amidotransferase C subunit, N-terminal domain"/>
    <property type="match status" value="1"/>
</dbReference>
<dbReference type="HAMAP" id="MF_00122">
    <property type="entry name" value="GatC"/>
    <property type="match status" value="1"/>
</dbReference>
<dbReference type="InterPro" id="IPR036113">
    <property type="entry name" value="Asp/Glu-ADT_sf_sub_c"/>
</dbReference>
<dbReference type="InterPro" id="IPR003837">
    <property type="entry name" value="GatC"/>
</dbReference>
<dbReference type="NCBIfam" id="TIGR00135">
    <property type="entry name" value="gatC"/>
    <property type="match status" value="1"/>
</dbReference>
<dbReference type="PANTHER" id="PTHR15004">
    <property type="entry name" value="GLUTAMYL-TRNA(GLN) AMIDOTRANSFERASE SUBUNIT C, MITOCHONDRIAL"/>
    <property type="match status" value="1"/>
</dbReference>
<dbReference type="PANTHER" id="PTHR15004:SF0">
    <property type="entry name" value="GLUTAMYL-TRNA(GLN) AMIDOTRANSFERASE SUBUNIT C, MITOCHONDRIAL"/>
    <property type="match status" value="1"/>
</dbReference>
<dbReference type="Pfam" id="PF02686">
    <property type="entry name" value="GatC"/>
    <property type="match status" value="1"/>
</dbReference>
<dbReference type="SUPFAM" id="SSF141000">
    <property type="entry name" value="Glu-tRNAGln amidotransferase C subunit"/>
    <property type="match status" value="1"/>
</dbReference>
<proteinExistence type="inferred from homology"/>
<evidence type="ECO:0000255" key="1">
    <source>
        <dbReference type="HAMAP-Rule" id="MF_00122"/>
    </source>
</evidence>
<evidence type="ECO:0000256" key="2">
    <source>
        <dbReference type="SAM" id="MobiDB-lite"/>
    </source>
</evidence>
<accession>B8JBQ2</accession>
<reference key="1">
    <citation type="submission" date="2009-01" db="EMBL/GenBank/DDBJ databases">
        <title>Complete sequence of Anaeromyxobacter dehalogenans 2CP-1.</title>
        <authorList>
            <person name="Lucas S."/>
            <person name="Copeland A."/>
            <person name="Lapidus A."/>
            <person name="Glavina del Rio T."/>
            <person name="Dalin E."/>
            <person name="Tice H."/>
            <person name="Bruce D."/>
            <person name="Goodwin L."/>
            <person name="Pitluck S."/>
            <person name="Saunders E."/>
            <person name="Brettin T."/>
            <person name="Detter J.C."/>
            <person name="Han C."/>
            <person name="Larimer F."/>
            <person name="Land M."/>
            <person name="Hauser L."/>
            <person name="Kyrpides N."/>
            <person name="Ovchinnikova G."/>
            <person name="Beliaev A.S."/>
            <person name="Richardson P."/>
        </authorList>
    </citation>
    <scope>NUCLEOTIDE SEQUENCE [LARGE SCALE GENOMIC DNA]</scope>
    <source>
        <strain>2CP-1 / ATCC BAA-258</strain>
    </source>
</reference>